<keyword id="KW-0325">Glycoprotein</keyword>
<keyword id="KW-0472">Membrane</keyword>
<keyword id="KW-1185">Reference proteome</keyword>
<keyword id="KW-0677">Repeat</keyword>
<keyword id="KW-0812">Transmembrane</keyword>
<keyword id="KW-1133">Transmembrane helix</keyword>
<keyword id="KW-0813">Transport</keyword>
<reference key="1">
    <citation type="journal article" date="2008" name="Nature">
        <title>The genome of Laccaria bicolor provides insights into mycorrhizal symbiosis.</title>
        <authorList>
            <person name="Martin F."/>
            <person name="Aerts A."/>
            <person name="Ahren D."/>
            <person name="Brun A."/>
            <person name="Danchin E.G.J."/>
            <person name="Duchaussoy F."/>
            <person name="Gibon J."/>
            <person name="Kohler A."/>
            <person name="Lindquist E."/>
            <person name="Pereda V."/>
            <person name="Salamov A."/>
            <person name="Shapiro H.J."/>
            <person name="Wuyts J."/>
            <person name="Blaudez D."/>
            <person name="Buee M."/>
            <person name="Brokstein P."/>
            <person name="Canbaeck B."/>
            <person name="Cohen D."/>
            <person name="Courty P.E."/>
            <person name="Coutinho P.M."/>
            <person name="Delaruelle C."/>
            <person name="Detter J.C."/>
            <person name="Deveau A."/>
            <person name="DiFazio S."/>
            <person name="Duplessis S."/>
            <person name="Fraissinet-Tachet L."/>
            <person name="Lucic E."/>
            <person name="Frey-Klett P."/>
            <person name="Fourrey C."/>
            <person name="Feussner I."/>
            <person name="Gay G."/>
            <person name="Grimwood J."/>
            <person name="Hoegger P.J."/>
            <person name="Jain P."/>
            <person name="Kilaru S."/>
            <person name="Labbe J."/>
            <person name="Lin Y.C."/>
            <person name="Legue V."/>
            <person name="Le Tacon F."/>
            <person name="Marmeisse R."/>
            <person name="Melayah D."/>
            <person name="Montanini B."/>
            <person name="Muratet M."/>
            <person name="Nehls U."/>
            <person name="Niculita-Hirzel H."/>
            <person name="Oudot-Le Secq M.P."/>
            <person name="Peter M."/>
            <person name="Quesneville H."/>
            <person name="Rajashekar B."/>
            <person name="Reich M."/>
            <person name="Rouhier N."/>
            <person name="Schmutz J."/>
            <person name="Yin T."/>
            <person name="Chalot M."/>
            <person name="Henrissat B."/>
            <person name="Kuees U."/>
            <person name="Lucas S."/>
            <person name="Van de Peer Y."/>
            <person name="Podila G.K."/>
            <person name="Polle A."/>
            <person name="Pukkila P.J."/>
            <person name="Richardson P.M."/>
            <person name="Rouze P."/>
            <person name="Sanders I.R."/>
            <person name="Stajich J.E."/>
            <person name="Tunlid A."/>
            <person name="Tuskan G."/>
            <person name="Grigoriev I.V."/>
        </authorList>
    </citation>
    <scope>NUCLEOTIDE SEQUENCE [LARGE SCALE GENOMIC DNA] OF 22-237</scope>
    <source>
        <strain>S238N-H82 / ATCC MYA-4686</strain>
    </source>
</reference>
<reference key="2">
    <citation type="journal article" date="2011" name="New Phytol.">
        <title>The aquaporin gene family of the ectomycorrhizal fungus Laccaria bicolor: lessons for symbiotic functions.</title>
        <authorList>
            <person name="Dietz S."/>
            <person name="von Buelow J."/>
            <person name="Beitz E."/>
            <person name="Nehls U."/>
        </authorList>
    </citation>
    <scope>FUNCTION</scope>
    <scope>DOMAIN</scope>
    <scope>TOPOLOGY</scope>
    <scope>TRANSPORTER ACTIVITY</scope>
    <scope>INDUCTION</scope>
</reference>
<evidence type="ECO:0000255" key="1"/>
<evidence type="ECO:0000255" key="2">
    <source>
        <dbReference type="PROSITE-ProRule" id="PRU00498"/>
    </source>
</evidence>
<evidence type="ECO:0000256" key="3">
    <source>
        <dbReference type="SAM" id="MobiDB-lite"/>
    </source>
</evidence>
<evidence type="ECO:0000269" key="4">
    <source>
    </source>
</evidence>
<evidence type="ECO:0000303" key="5">
    <source>
    </source>
</evidence>
<evidence type="ECO:0000305" key="6"/>
<evidence type="ECO:0000305" key="7">
    <source>
    </source>
</evidence>
<accession>B0DMR6</accession>
<comment type="function">
    <text evidence="4">Water channel required to facilitate the transport of water across membranes (PubMed:21352231). Also enables low but statistically significant ammonium permeability (PubMed:21352231). May be involved in fungal nitrogen (ammonium) support of the plant host in symbiosis (PubMed:21352231).</text>
</comment>
<comment type="catalytic activity">
    <reaction evidence="4">
        <text>H2O(in) = H2O(out)</text>
        <dbReference type="Rhea" id="RHEA:29667"/>
        <dbReference type="ChEBI" id="CHEBI:15377"/>
    </reaction>
</comment>
<comment type="catalytic activity">
    <reaction evidence="4">
        <text>NH4(+)(in) = NH4(+)(out)</text>
        <dbReference type="Rhea" id="RHEA:28747"/>
        <dbReference type="ChEBI" id="CHEBI:28938"/>
    </reaction>
</comment>
<comment type="subcellular location">
    <subcellularLocation>
        <location evidence="1">Membrane</location>
        <topology evidence="1">Multi-pass membrane protein</topology>
    </subcellularLocation>
</comment>
<comment type="induction">
    <text evidence="4">Shows similar high expression levels when grown between 15 and 33.5 degrees Celsius but a 50% reduction below 15 degrees Celsius.</text>
</comment>
<comment type="domain">
    <text evidence="7">Aquaporins contain two tandem repeats each containing three membrane-spanning domains and a pore-forming loop with the signature motif Asn-Pro-Ala (NPA) (Probable). Lacbi1:392091 has NPN/NSA motifs which is in accordance with the fungal aquaporins (NPx and NxA) (Probable).</text>
</comment>
<comment type="similarity">
    <text evidence="6">Belongs to the MIP/aquaporin (TC 1.A.8) family.</text>
</comment>
<comment type="sequence caution" evidence="6">
    <conflict type="erroneous gene model prediction">
        <sequence resource="EMBL-CDS" id="EDR04016"/>
    </conflict>
</comment>
<dbReference type="EMBL" id="DS547120">
    <property type="protein sequence ID" value="EDR04016.1"/>
    <property type="status" value="ALT_SEQ"/>
    <property type="molecule type" value="Genomic_DNA"/>
</dbReference>
<dbReference type="RefSeq" id="XP_001885271.1">
    <property type="nucleotide sequence ID" value="XM_001885236.1"/>
</dbReference>
<dbReference type="SMR" id="B0DMR6"/>
<dbReference type="STRING" id="486041.B0DMR6"/>
<dbReference type="GeneID" id="6080913"/>
<dbReference type="KEGG" id="lbc:LACBIDRAFT_167839"/>
<dbReference type="HOGENOM" id="CLU_020019_1_4_1"/>
<dbReference type="InParanoid" id="B0DMR6"/>
<dbReference type="OrthoDB" id="3222at2759"/>
<dbReference type="Proteomes" id="UP000001194">
    <property type="component" value="Unassembled WGS sequence"/>
</dbReference>
<dbReference type="GO" id="GO:0005886">
    <property type="term" value="C:plasma membrane"/>
    <property type="evidence" value="ECO:0007669"/>
    <property type="project" value="TreeGrafter"/>
</dbReference>
<dbReference type="GO" id="GO:0015250">
    <property type="term" value="F:water channel activity"/>
    <property type="evidence" value="ECO:0007669"/>
    <property type="project" value="TreeGrafter"/>
</dbReference>
<dbReference type="FunFam" id="1.20.1080.10:FF:000014">
    <property type="entry name" value="Aquaporin 1"/>
    <property type="match status" value="1"/>
</dbReference>
<dbReference type="Gene3D" id="1.20.1080.10">
    <property type="entry name" value="Glycerol uptake facilitator protein"/>
    <property type="match status" value="1"/>
</dbReference>
<dbReference type="InterPro" id="IPR023271">
    <property type="entry name" value="Aquaporin-like"/>
</dbReference>
<dbReference type="InterPro" id="IPR034294">
    <property type="entry name" value="Aquaporin_transptr"/>
</dbReference>
<dbReference type="InterPro" id="IPR000425">
    <property type="entry name" value="MIP"/>
</dbReference>
<dbReference type="PANTHER" id="PTHR19139">
    <property type="entry name" value="AQUAPORIN TRANSPORTER"/>
    <property type="match status" value="1"/>
</dbReference>
<dbReference type="PANTHER" id="PTHR19139:SF199">
    <property type="entry name" value="MIP17260P"/>
    <property type="match status" value="1"/>
</dbReference>
<dbReference type="Pfam" id="PF00230">
    <property type="entry name" value="MIP"/>
    <property type="match status" value="1"/>
</dbReference>
<dbReference type="PRINTS" id="PR00783">
    <property type="entry name" value="MINTRINSICP"/>
</dbReference>
<dbReference type="SUPFAM" id="SSF81338">
    <property type="entry name" value="Aquaporin-like"/>
    <property type="match status" value="1"/>
</dbReference>
<organism>
    <name type="scientific">Laccaria bicolor (strain S238N-H82 / ATCC MYA-4686)</name>
    <name type="common">Bicoloured deceiver</name>
    <name type="synonym">Laccaria laccata var. bicolor</name>
    <dbReference type="NCBI Taxonomy" id="486041"/>
    <lineage>
        <taxon>Eukaryota</taxon>
        <taxon>Fungi</taxon>
        <taxon>Dikarya</taxon>
        <taxon>Basidiomycota</taxon>
        <taxon>Agaricomycotina</taxon>
        <taxon>Agaricomycetes</taxon>
        <taxon>Agaricomycetidae</taxon>
        <taxon>Agaricales</taxon>
        <taxon>Agaricineae</taxon>
        <taxon>Hydnangiaceae</taxon>
        <taxon>Laccaria</taxon>
    </lineage>
</organism>
<name>AQP1_LACBS</name>
<feature type="chain" id="PRO_5002747286" description="Aquaporin Lacbi1:392091">
    <location>
        <begin position="1"/>
        <end position="311"/>
    </location>
</feature>
<feature type="topological domain" description="Cytoplasmic" evidence="7">
    <location>
        <begin position="1"/>
        <end position="16"/>
    </location>
</feature>
<feature type="transmembrane region" description="Helical" evidence="1">
    <location>
        <begin position="17"/>
        <end position="37"/>
    </location>
</feature>
<feature type="topological domain" description="Extracellular" evidence="7">
    <location>
        <begin position="38"/>
        <end position="56"/>
    </location>
</feature>
<feature type="transmembrane region" description="Helical" evidence="1">
    <location>
        <begin position="57"/>
        <end position="77"/>
    </location>
</feature>
<feature type="topological domain" description="Cytoplasmic" evidence="7">
    <location>
        <position position="78"/>
    </location>
</feature>
<feature type="transmembrane region" description="Helical" evidence="1">
    <location>
        <begin position="79"/>
        <end position="99"/>
    </location>
</feature>
<feature type="topological domain" description="Extracellular" evidence="7">
    <location>
        <position position="100"/>
    </location>
</feature>
<feature type="transmembrane region" description="Helical" evidence="1">
    <location>
        <begin position="101"/>
        <end position="121"/>
    </location>
</feature>
<feature type="topological domain" description="Cytoplasmic" evidence="7">
    <location>
        <begin position="122"/>
        <end position="143"/>
    </location>
</feature>
<feature type="transmembrane region" description="Helical" evidence="1">
    <location>
        <begin position="144"/>
        <end position="164"/>
    </location>
</feature>
<feature type="topological domain" description="Extracellular" evidence="7">
    <location>
        <begin position="165"/>
        <end position="168"/>
    </location>
</feature>
<feature type="transmembrane region" description="Helical" evidence="1">
    <location>
        <begin position="169"/>
        <end position="189"/>
    </location>
</feature>
<feature type="topological domain" description="Cytoplasmic" evidence="7">
    <location>
        <begin position="190"/>
        <end position="215"/>
    </location>
</feature>
<feature type="transmembrane region" description="Helical" evidence="1">
    <location>
        <begin position="216"/>
        <end position="236"/>
    </location>
</feature>
<feature type="topological domain" description="Extracellular" evidence="7">
    <location>
        <begin position="237"/>
        <end position="311"/>
    </location>
</feature>
<feature type="region of interest" description="Disordered" evidence="3">
    <location>
        <begin position="276"/>
        <end position="311"/>
    </location>
</feature>
<feature type="short sequence motif" description="NPA 1" evidence="7">
    <location>
        <begin position="85"/>
        <end position="87"/>
    </location>
</feature>
<feature type="short sequence motif" description="NPA 2" evidence="7">
    <location>
        <begin position="197"/>
        <end position="199"/>
    </location>
</feature>
<feature type="compositionally biased region" description="Basic and acidic residues" evidence="3">
    <location>
        <begin position="288"/>
        <end position="298"/>
    </location>
</feature>
<feature type="compositionally biased region" description="Polar residues" evidence="3">
    <location>
        <begin position="299"/>
        <end position="311"/>
    </location>
</feature>
<feature type="glycosylation site" description="N-linked (GlcNAc...) asparagine" evidence="2">
    <location>
        <position position="300"/>
    </location>
</feature>
<sequence length="311" mass="32959">MHPQVASLFDNVYEDLAAATLEFIGTAFFLLFGLGGIQASTAEDTASGQPPASGIEHVLYISTCMGLSLVVSAWLFFRVTGGLFNPNISFALLLVGGLKPLRFVLFCIAQLTGAIAGAAIVRGLTSAPLSVNNVLQQGTSAAQGVFIEMFITAALVLSVLMLAAEKHEATPFAPVGIGLTLFACHLFAVYYTGAAMNSARAFGPAVISGFPEPQHWVYWVGPFLGSLLGAGFYATLKHYKYWHLNPDQATSDYRKSPSDPVALLKSTAETFINVGDEETRNGCASNEEGVRATGDEKSSNATSSRTNFSPV</sequence>
<protein>
    <recommendedName>
        <fullName evidence="5">Aquaporin Lacbi1:392091</fullName>
    </recommendedName>
</protein>
<gene>
    <name type="ORF">Lacbi1:392091</name>
    <name type="ORF">LACBIDRAFT_167839</name>
</gene>
<proteinExistence type="evidence at protein level"/>